<evidence type="ECO:0000255" key="1">
    <source>
        <dbReference type="HAMAP-Rule" id="MF_00001"/>
    </source>
</evidence>
<feature type="chain" id="PRO_0000301571" description="Aspartate carbamoyltransferase catalytic subunit">
    <location>
        <begin position="1"/>
        <end position="299"/>
    </location>
</feature>
<feature type="binding site" evidence="1">
    <location>
        <position position="51"/>
    </location>
    <ligand>
        <name>carbamoyl phosphate</name>
        <dbReference type="ChEBI" id="CHEBI:58228"/>
    </ligand>
</feature>
<feature type="binding site" evidence="1">
    <location>
        <position position="52"/>
    </location>
    <ligand>
        <name>carbamoyl phosphate</name>
        <dbReference type="ChEBI" id="CHEBI:58228"/>
    </ligand>
</feature>
<feature type="binding site" evidence="1">
    <location>
        <position position="79"/>
    </location>
    <ligand>
        <name>L-aspartate</name>
        <dbReference type="ChEBI" id="CHEBI:29991"/>
    </ligand>
</feature>
<feature type="binding site" evidence="1">
    <location>
        <position position="101"/>
    </location>
    <ligand>
        <name>carbamoyl phosphate</name>
        <dbReference type="ChEBI" id="CHEBI:58228"/>
    </ligand>
</feature>
<feature type="binding site" evidence="1">
    <location>
        <position position="130"/>
    </location>
    <ligand>
        <name>carbamoyl phosphate</name>
        <dbReference type="ChEBI" id="CHEBI:58228"/>
    </ligand>
</feature>
<feature type="binding site" evidence="1">
    <location>
        <position position="133"/>
    </location>
    <ligand>
        <name>carbamoyl phosphate</name>
        <dbReference type="ChEBI" id="CHEBI:58228"/>
    </ligand>
</feature>
<feature type="binding site" evidence="1">
    <location>
        <position position="163"/>
    </location>
    <ligand>
        <name>L-aspartate</name>
        <dbReference type="ChEBI" id="CHEBI:29991"/>
    </ligand>
</feature>
<feature type="binding site" evidence="1">
    <location>
        <position position="215"/>
    </location>
    <ligand>
        <name>L-aspartate</name>
        <dbReference type="ChEBI" id="CHEBI:29991"/>
    </ligand>
</feature>
<feature type="binding site" evidence="1">
    <location>
        <position position="256"/>
    </location>
    <ligand>
        <name>carbamoyl phosphate</name>
        <dbReference type="ChEBI" id="CHEBI:58228"/>
    </ligand>
</feature>
<feature type="binding site" evidence="1">
    <location>
        <position position="257"/>
    </location>
    <ligand>
        <name>carbamoyl phosphate</name>
        <dbReference type="ChEBI" id="CHEBI:58228"/>
    </ligand>
</feature>
<organism>
    <name type="scientific">Ehrlichia chaffeensis (strain ATCC CRL-10679 / Arkansas)</name>
    <dbReference type="NCBI Taxonomy" id="205920"/>
    <lineage>
        <taxon>Bacteria</taxon>
        <taxon>Pseudomonadati</taxon>
        <taxon>Pseudomonadota</taxon>
        <taxon>Alphaproteobacteria</taxon>
        <taxon>Rickettsiales</taxon>
        <taxon>Anaplasmataceae</taxon>
        <taxon>Ehrlichia</taxon>
    </lineage>
</organism>
<sequence>MKTLLEVSNLTSDDIESIFNLTIQYFNNTNLNHNILTGKVIVNLFFESSTRTLSSFEIAEKSLGAHSITLNINTSSINKGESIIDTISNIDAMNPDLIIIRSQYSQFIKKISEYLPSCSIINAGDGHHEHPTQALTDYCTIRYIKKDINNLNISICGDILHSRVARSNIRLLSRYGANISLVAPPTLSCNLTGISHIYHNLIEGIRNADVIMLLRLQKERIINCVIPSEQEYSHLYMLNHEKLLHAKKDVIVMHPGPTNKGIEISNNVAEKNSVILLQVKMGVAARKAILHYLLYNKSI</sequence>
<name>PYRB_EHRCR</name>
<dbReference type="EC" id="2.1.3.2" evidence="1"/>
<dbReference type="EMBL" id="CP000236">
    <property type="protein sequence ID" value="ABD45390.1"/>
    <property type="molecule type" value="Genomic_DNA"/>
</dbReference>
<dbReference type="RefSeq" id="WP_006010922.1">
    <property type="nucleotide sequence ID" value="NC_007799.1"/>
</dbReference>
<dbReference type="SMR" id="Q2GGK2"/>
<dbReference type="STRING" id="205920.ECH_0621"/>
<dbReference type="KEGG" id="ech:ECH_0621"/>
<dbReference type="eggNOG" id="COG0540">
    <property type="taxonomic scope" value="Bacteria"/>
</dbReference>
<dbReference type="HOGENOM" id="CLU_043846_2_0_5"/>
<dbReference type="OrthoDB" id="9774690at2"/>
<dbReference type="UniPathway" id="UPA00070">
    <property type="reaction ID" value="UER00116"/>
</dbReference>
<dbReference type="Proteomes" id="UP000008320">
    <property type="component" value="Chromosome"/>
</dbReference>
<dbReference type="GO" id="GO:0005829">
    <property type="term" value="C:cytosol"/>
    <property type="evidence" value="ECO:0007669"/>
    <property type="project" value="TreeGrafter"/>
</dbReference>
<dbReference type="GO" id="GO:0016597">
    <property type="term" value="F:amino acid binding"/>
    <property type="evidence" value="ECO:0007669"/>
    <property type="project" value="InterPro"/>
</dbReference>
<dbReference type="GO" id="GO:0004070">
    <property type="term" value="F:aspartate carbamoyltransferase activity"/>
    <property type="evidence" value="ECO:0007669"/>
    <property type="project" value="UniProtKB-UniRule"/>
</dbReference>
<dbReference type="GO" id="GO:0006207">
    <property type="term" value="P:'de novo' pyrimidine nucleobase biosynthetic process"/>
    <property type="evidence" value="ECO:0007669"/>
    <property type="project" value="InterPro"/>
</dbReference>
<dbReference type="GO" id="GO:0044205">
    <property type="term" value="P:'de novo' UMP biosynthetic process"/>
    <property type="evidence" value="ECO:0007669"/>
    <property type="project" value="UniProtKB-UniRule"/>
</dbReference>
<dbReference type="GO" id="GO:0006520">
    <property type="term" value="P:amino acid metabolic process"/>
    <property type="evidence" value="ECO:0007669"/>
    <property type="project" value="InterPro"/>
</dbReference>
<dbReference type="Gene3D" id="3.40.50.1370">
    <property type="entry name" value="Aspartate/ornithine carbamoyltransferase"/>
    <property type="match status" value="2"/>
</dbReference>
<dbReference type="HAMAP" id="MF_00001">
    <property type="entry name" value="Asp_carb_tr"/>
    <property type="match status" value="1"/>
</dbReference>
<dbReference type="InterPro" id="IPR006132">
    <property type="entry name" value="Asp/Orn_carbamoyltranf_P-bd"/>
</dbReference>
<dbReference type="InterPro" id="IPR006130">
    <property type="entry name" value="Asp/Orn_carbamoylTrfase"/>
</dbReference>
<dbReference type="InterPro" id="IPR036901">
    <property type="entry name" value="Asp/Orn_carbamoylTrfase_sf"/>
</dbReference>
<dbReference type="InterPro" id="IPR002082">
    <property type="entry name" value="Asp_carbamoyltransf"/>
</dbReference>
<dbReference type="InterPro" id="IPR006131">
    <property type="entry name" value="Asp_carbamoyltransf_Asp/Orn-bd"/>
</dbReference>
<dbReference type="NCBIfam" id="TIGR00670">
    <property type="entry name" value="asp_carb_tr"/>
    <property type="match status" value="1"/>
</dbReference>
<dbReference type="NCBIfam" id="NF002032">
    <property type="entry name" value="PRK00856.1"/>
    <property type="match status" value="1"/>
</dbReference>
<dbReference type="PANTHER" id="PTHR45753:SF6">
    <property type="entry name" value="ASPARTATE CARBAMOYLTRANSFERASE"/>
    <property type="match status" value="1"/>
</dbReference>
<dbReference type="PANTHER" id="PTHR45753">
    <property type="entry name" value="ORNITHINE CARBAMOYLTRANSFERASE, MITOCHONDRIAL"/>
    <property type="match status" value="1"/>
</dbReference>
<dbReference type="Pfam" id="PF00185">
    <property type="entry name" value="OTCace"/>
    <property type="match status" value="1"/>
</dbReference>
<dbReference type="Pfam" id="PF02729">
    <property type="entry name" value="OTCace_N"/>
    <property type="match status" value="1"/>
</dbReference>
<dbReference type="PRINTS" id="PR00100">
    <property type="entry name" value="AOTCASE"/>
</dbReference>
<dbReference type="PRINTS" id="PR00101">
    <property type="entry name" value="ATCASE"/>
</dbReference>
<dbReference type="SUPFAM" id="SSF53671">
    <property type="entry name" value="Aspartate/ornithine carbamoyltransferase"/>
    <property type="match status" value="1"/>
</dbReference>
<dbReference type="PROSITE" id="PS00097">
    <property type="entry name" value="CARBAMOYLTRANSFERASE"/>
    <property type="match status" value="1"/>
</dbReference>
<accession>Q2GGK2</accession>
<protein>
    <recommendedName>
        <fullName evidence="1">Aspartate carbamoyltransferase catalytic subunit</fullName>
        <ecNumber evidence="1">2.1.3.2</ecNumber>
    </recommendedName>
    <alternativeName>
        <fullName evidence="1">Aspartate transcarbamylase</fullName>
        <shortName evidence="1">ATCase</shortName>
    </alternativeName>
</protein>
<proteinExistence type="inferred from homology"/>
<keyword id="KW-0665">Pyrimidine biosynthesis</keyword>
<keyword id="KW-1185">Reference proteome</keyword>
<keyword id="KW-0808">Transferase</keyword>
<gene>
    <name evidence="1" type="primary">pyrB</name>
    <name type="ordered locus">ECH_0621</name>
</gene>
<comment type="function">
    <text evidence="1">Catalyzes the condensation of carbamoyl phosphate and aspartate to form carbamoyl aspartate and inorganic phosphate, the committed step in the de novo pyrimidine nucleotide biosynthesis pathway.</text>
</comment>
<comment type="catalytic activity">
    <reaction evidence="1">
        <text>carbamoyl phosphate + L-aspartate = N-carbamoyl-L-aspartate + phosphate + H(+)</text>
        <dbReference type="Rhea" id="RHEA:20013"/>
        <dbReference type="ChEBI" id="CHEBI:15378"/>
        <dbReference type="ChEBI" id="CHEBI:29991"/>
        <dbReference type="ChEBI" id="CHEBI:32814"/>
        <dbReference type="ChEBI" id="CHEBI:43474"/>
        <dbReference type="ChEBI" id="CHEBI:58228"/>
        <dbReference type="EC" id="2.1.3.2"/>
    </reaction>
</comment>
<comment type="pathway">
    <text evidence="1">Pyrimidine metabolism; UMP biosynthesis via de novo pathway; (S)-dihydroorotate from bicarbonate: step 2/3.</text>
</comment>
<comment type="subunit">
    <text evidence="1">Heterododecamer (2C3:3R2) of six catalytic PyrB chains organized as two trimers (C3), and six regulatory PyrI chains organized as three dimers (R2).</text>
</comment>
<comment type="similarity">
    <text evidence="1">Belongs to the aspartate/ornithine carbamoyltransferase superfamily. ATCase family.</text>
</comment>
<reference key="1">
    <citation type="journal article" date="2006" name="PLoS Genet.">
        <title>Comparative genomics of emerging human ehrlichiosis agents.</title>
        <authorList>
            <person name="Dunning Hotopp J.C."/>
            <person name="Lin M."/>
            <person name="Madupu R."/>
            <person name="Crabtree J."/>
            <person name="Angiuoli S.V."/>
            <person name="Eisen J.A."/>
            <person name="Seshadri R."/>
            <person name="Ren Q."/>
            <person name="Wu M."/>
            <person name="Utterback T.R."/>
            <person name="Smith S."/>
            <person name="Lewis M."/>
            <person name="Khouri H."/>
            <person name="Zhang C."/>
            <person name="Niu H."/>
            <person name="Lin Q."/>
            <person name="Ohashi N."/>
            <person name="Zhi N."/>
            <person name="Nelson W.C."/>
            <person name="Brinkac L.M."/>
            <person name="Dodson R.J."/>
            <person name="Rosovitz M.J."/>
            <person name="Sundaram J.P."/>
            <person name="Daugherty S.C."/>
            <person name="Davidsen T."/>
            <person name="Durkin A.S."/>
            <person name="Gwinn M.L."/>
            <person name="Haft D.H."/>
            <person name="Selengut J.D."/>
            <person name="Sullivan S.A."/>
            <person name="Zafar N."/>
            <person name="Zhou L."/>
            <person name="Benahmed F."/>
            <person name="Forberger H."/>
            <person name="Halpin R."/>
            <person name="Mulligan S."/>
            <person name="Robinson J."/>
            <person name="White O."/>
            <person name="Rikihisa Y."/>
            <person name="Tettelin H."/>
        </authorList>
    </citation>
    <scope>NUCLEOTIDE SEQUENCE [LARGE SCALE GENOMIC DNA]</scope>
    <source>
        <strain>ATCC CRL-10679 / Arkansas</strain>
    </source>
</reference>